<protein>
    <recommendedName>
        <fullName evidence="6">Pectin acetylesterase 3</fullName>
        <ecNumber evidence="7">3.1.1.-</ecNumber>
    </recommendedName>
</protein>
<feature type="signal peptide" evidence="3">
    <location>
        <begin position="1"/>
        <end position="25"/>
    </location>
</feature>
<feature type="chain" id="PRO_0000431768" description="Pectin acetylesterase 3" evidence="3">
    <location>
        <begin position="26"/>
        <end position="416"/>
    </location>
</feature>
<feature type="active site" description="Charge relay system" evidence="2">
    <location>
        <position position="198"/>
    </location>
</feature>
<feature type="active site" description="Charge relay system" evidence="2">
    <location>
        <position position="294"/>
    </location>
</feature>
<feature type="active site" description="Charge relay system" evidence="2">
    <location>
        <position position="361"/>
    </location>
</feature>
<feature type="glycosylation site" description="N-linked (GlcNAc...) asparagine" evidence="4">
    <location>
        <position position="131"/>
    </location>
</feature>
<feature type="glycosylation site" description="N-linked (GlcNAc...) asparagine" evidence="4">
    <location>
        <position position="324"/>
    </location>
</feature>
<name>PAE3_ARATH</name>
<organism>
    <name type="scientific">Arabidopsis thaliana</name>
    <name type="common">Mouse-ear cress</name>
    <dbReference type="NCBI Taxonomy" id="3702"/>
    <lineage>
        <taxon>Eukaryota</taxon>
        <taxon>Viridiplantae</taxon>
        <taxon>Streptophyta</taxon>
        <taxon>Embryophyta</taxon>
        <taxon>Tracheophyta</taxon>
        <taxon>Spermatophyta</taxon>
        <taxon>Magnoliopsida</taxon>
        <taxon>eudicotyledons</taxon>
        <taxon>Gunneridae</taxon>
        <taxon>Pentapetalae</taxon>
        <taxon>rosids</taxon>
        <taxon>malvids</taxon>
        <taxon>Brassicales</taxon>
        <taxon>Brassicaceae</taxon>
        <taxon>Camelineae</taxon>
        <taxon>Arabidopsis</taxon>
    </lineage>
</organism>
<reference key="1">
    <citation type="journal article" date="1999" name="Nature">
        <title>Sequence and analysis of chromosome 2 of the plant Arabidopsis thaliana.</title>
        <authorList>
            <person name="Lin X."/>
            <person name="Kaul S."/>
            <person name="Rounsley S.D."/>
            <person name="Shea T.P."/>
            <person name="Benito M.-I."/>
            <person name="Town C.D."/>
            <person name="Fujii C.Y."/>
            <person name="Mason T.M."/>
            <person name="Bowman C.L."/>
            <person name="Barnstead M.E."/>
            <person name="Feldblyum T.V."/>
            <person name="Buell C.R."/>
            <person name="Ketchum K.A."/>
            <person name="Lee J.J."/>
            <person name="Ronning C.M."/>
            <person name="Koo H.L."/>
            <person name="Moffat K.S."/>
            <person name="Cronin L.A."/>
            <person name="Shen M."/>
            <person name="Pai G."/>
            <person name="Van Aken S."/>
            <person name="Umayam L."/>
            <person name="Tallon L.J."/>
            <person name="Gill J.E."/>
            <person name="Adams M.D."/>
            <person name="Carrera A.J."/>
            <person name="Creasy T.H."/>
            <person name="Goodman H.M."/>
            <person name="Somerville C.R."/>
            <person name="Copenhaver G.P."/>
            <person name="Preuss D."/>
            <person name="Nierman W.C."/>
            <person name="White O."/>
            <person name="Eisen J.A."/>
            <person name="Salzberg S.L."/>
            <person name="Fraser C.M."/>
            <person name="Venter J.C."/>
        </authorList>
    </citation>
    <scope>NUCLEOTIDE SEQUENCE [LARGE SCALE GENOMIC DNA]</scope>
    <source>
        <strain>cv. Columbia</strain>
    </source>
</reference>
<reference key="2">
    <citation type="journal article" date="2017" name="Plant J.">
        <title>Araport11: a complete reannotation of the Arabidopsis thaliana reference genome.</title>
        <authorList>
            <person name="Cheng C.Y."/>
            <person name="Krishnakumar V."/>
            <person name="Chan A.P."/>
            <person name="Thibaud-Nissen F."/>
            <person name="Schobel S."/>
            <person name="Town C.D."/>
        </authorList>
    </citation>
    <scope>GENOME REANNOTATION</scope>
    <source>
        <strain>cv. Columbia</strain>
    </source>
</reference>
<reference key="3">
    <citation type="journal article" date="2003" name="Science">
        <title>Empirical analysis of transcriptional activity in the Arabidopsis genome.</title>
        <authorList>
            <person name="Yamada K."/>
            <person name="Lim J."/>
            <person name="Dale J.M."/>
            <person name="Chen H."/>
            <person name="Shinn P."/>
            <person name="Palm C.J."/>
            <person name="Southwick A.M."/>
            <person name="Wu H.C."/>
            <person name="Kim C.J."/>
            <person name="Nguyen M."/>
            <person name="Pham P.K."/>
            <person name="Cheuk R.F."/>
            <person name="Karlin-Newmann G."/>
            <person name="Liu S.X."/>
            <person name="Lam B."/>
            <person name="Sakano H."/>
            <person name="Wu T."/>
            <person name="Yu G."/>
            <person name="Miranda M."/>
            <person name="Quach H.L."/>
            <person name="Tripp M."/>
            <person name="Chang C.H."/>
            <person name="Lee J.M."/>
            <person name="Toriumi M.J."/>
            <person name="Chan M.M."/>
            <person name="Tang C.C."/>
            <person name="Onodera C.S."/>
            <person name="Deng J.M."/>
            <person name="Akiyama K."/>
            <person name="Ansari Y."/>
            <person name="Arakawa T."/>
            <person name="Banh J."/>
            <person name="Banno F."/>
            <person name="Bowser L."/>
            <person name="Brooks S.Y."/>
            <person name="Carninci P."/>
            <person name="Chao Q."/>
            <person name="Choy N."/>
            <person name="Enju A."/>
            <person name="Goldsmith A.D."/>
            <person name="Gurjal M."/>
            <person name="Hansen N.F."/>
            <person name="Hayashizaki Y."/>
            <person name="Johnson-Hopson C."/>
            <person name="Hsuan V.W."/>
            <person name="Iida K."/>
            <person name="Karnes M."/>
            <person name="Khan S."/>
            <person name="Koesema E."/>
            <person name="Ishida J."/>
            <person name="Jiang P.X."/>
            <person name="Jones T."/>
            <person name="Kawai J."/>
            <person name="Kamiya A."/>
            <person name="Meyers C."/>
            <person name="Nakajima M."/>
            <person name="Narusaka M."/>
            <person name="Seki M."/>
            <person name="Sakurai T."/>
            <person name="Satou M."/>
            <person name="Tamse R."/>
            <person name="Vaysberg M."/>
            <person name="Wallender E.K."/>
            <person name="Wong C."/>
            <person name="Yamamura Y."/>
            <person name="Yuan S."/>
            <person name="Shinozaki K."/>
            <person name="Davis R.W."/>
            <person name="Theologis A."/>
            <person name="Ecker J.R."/>
        </authorList>
    </citation>
    <scope>NUCLEOTIDE SEQUENCE [LARGE SCALE MRNA]</scope>
    <source>
        <strain>cv. Columbia</strain>
    </source>
</reference>
<reference key="4">
    <citation type="journal article" date="2014" name="Planta">
        <title>Identification and functional characterization of the distinct plant pectin esterases PAE8 and PAE9 and their deletion mutants.</title>
        <authorList>
            <person name="de Souza A."/>
            <person name="Hull P.A."/>
            <person name="Gille S."/>
            <person name="Pauly M."/>
        </authorList>
    </citation>
    <scope>GENE FAMILY</scope>
    <scope>DISRUPTION PHENOTYPE</scope>
</reference>
<accession>O80731</accession>
<comment type="function">
    <text evidence="1">Hydrolyzes acetyl esters in homogalacturonan regions of pectin. In type I primary cell wall, galacturonic acid residues of pectin can be acetylated at the O-2 and O-3 positions. Decreasing the degree of acetylation of pectin gels in vitro alters their physical properties.</text>
</comment>
<comment type="subcellular location">
    <subcellularLocation>
        <location evidence="7">Secreted</location>
        <location evidence="7">Cell wall</location>
    </subcellularLocation>
</comment>
<comment type="disruption phenotype">
    <text evidence="5">No visible phenotype under normal growth conditions.</text>
</comment>
<comment type="similarity">
    <text evidence="7">Belongs to the pectinacetylesterase family.</text>
</comment>
<evidence type="ECO:0000250" key="1">
    <source>
        <dbReference type="UniProtKB" id="B9DFR3"/>
    </source>
</evidence>
<evidence type="ECO:0000250" key="2">
    <source>
        <dbReference type="UniProtKB" id="Q6P988"/>
    </source>
</evidence>
<evidence type="ECO:0000255" key="3"/>
<evidence type="ECO:0000255" key="4">
    <source>
        <dbReference type="PROSITE-ProRule" id="PRU00498"/>
    </source>
</evidence>
<evidence type="ECO:0000269" key="5">
    <source>
    </source>
</evidence>
<evidence type="ECO:0000303" key="6">
    <source>
    </source>
</evidence>
<evidence type="ECO:0000305" key="7"/>
<evidence type="ECO:0000312" key="8">
    <source>
        <dbReference type="Araport" id="AT2G46930"/>
    </source>
</evidence>
<dbReference type="EC" id="3.1.1.-" evidence="7"/>
<dbReference type="EMBL" id="AC004411">
    <property type="protein sequence ID" value="AAC34238.1"/>
    <property type="molecule type" value="Genomic_DNA"/>
</dbReference>
<dbReference type="EMBL" id="CP002685">
    <property type="protein sequence ID" value="AEC10774.1"/>
    <property type="molecule type" value="Genomic_DNA"/>
</dbReference>
<dbReference type="EMBL" id="AY052671">
    <property type="protein sequence ID" value="AAK96575.1"/>
    <property type="molecule type" value="mRNA"/>
</dbReference>
<dbReference type="PIR" id="T02194">
    <property type="entry name" value="T02194"/>
</dbReference>
<dbReference type="RefSeq" id="NP_182216.1">
    <property type="nucleotide sequence ID" value="NM_130261.3"/>
</dbReference>
<dbReference type="SMR" id="O80731"/>
<dbReference type="FunCoup" id="O80731">
    <property type="interactions" value="178"/>
</dbReference>
<dbReference type="STRING" id="3702.O80731"/>
<dbReference type="ESTHER" id="arath-o80731">
    <property type="family name" value="Pectinacetylesterase-Notum"/>
</dbReference>
<dbReference type="GlyCosmos" id="O80731">
    <property type="glycosylation" value="2 sites, No reported glycans"/>
</dbReference>
<dbReference type="GlyGen" id="O80731">
    <property type="glycosylation" value="2 sites"/>
</dbReference>
<dbReference type="iPTMnet" id="O80731"/>
<dbReference type="PaxDb" id="3702-AT2G46930.1"/>
<dbReference type="ProteomicsDB" id="236317"/>
<dbReference type="EnsemblPlants" id="AT2G46930.1">
    <property type="protein sequence ID" value="AT2G46930.1"/>
    <property type="gene ID" value="AT2G46930"/>
</dbReference>
<dbReference type="GeneID" id="819307"/>
<dbReference type="Gramene" id="AT2G46930.1">
    <property type="protein sequence ID" value="AT2G46930.1"/>
    <property type="gene ID" value="AT2G46930"/>
</dbReference>
<dbReference type="KEGG" id="ath:AT2G46930"/>
<dbReference type="Araport" id="AT2G46930"/>
<dbReference type="TAIR" id="AT2G46930">
    <property type="gene designation" value="PAE3"/>
</dbReference>
<dbReference type="eggNOG" id="KOG4287">
    <property type="taxonomic scope" value="Eukaryota"/>
</dbReference>
<dbReference type="HOGENOM" id="CLU_031008_0_0_1"/>
<dbReference type="InParanoid" id="O80731"/>
<dbReference type="OMA" id="FFQDFRT"/>
<dbReference type="PhylomeDB" id="O80731"/>
<dbReference type="PRO" id="PR:O80731"/>
<dbReference type="Proteomes" id="UP000006548">
    <property type="component" value="Chromosome 2"/>
</dbReference>
<dbReference type="ExpressionAtlas" id="O80731">
    <property type="expression patterns" value="baseline and differential"/>
</dbReference>
<dbReference type="GO" id="GO:0005576">
    <property type="term" value="C:extracellular region"/>
    <property type="evidence" value="ECO:0007669"/>
    <property type="project" value="UniProtKB-KW"/>
</dbReference>
<dbReference type="GO" id="GO:0052793">
    <property type="term" value="F:pectin acetylesterase activity"/>
    <property type="evidence" value="ECO:0000314"/>
    <property type="project" value="TAIR"/>
</dbReference>
<dbReference type="GO" id="GO:0071555">
    <property type="term" value="P:cell wall organization"/>
    <property type="evidence" value="ECO:0000315"/>
    <property type="project" value="TAIR"/>
</dbReference>
<dbReference type="InterPro" id="IPR004963">
    <property type="entry name" value="PAE/NOTUM"/>
</dbReference>
<dbReference type="PANTHER" id="PTHR21562">
    <property type="entry name" value="NOTUM-RELATED"/>
    <property type="match status" value="1"/>
</dbReference>
<dbReference type="PANTHER" id="PTHR21562:SF98">
    <property type="entry name" value="PECTIN ACETYLESTERASE 3"/>
    <property type="match status" value="1"/>
</dbReference>
<dbReference type="Pfam" id="PF03283">
    <property type="entry name" value="PAE"/>
    <property type="match status" value="1"/>
</dbReference>
<sequence>MKSVLRIAAAIFWLWLFIVLGVIGSGNVRDTDDEISLLESQLVVTSPSQLLMVPLTLIQAAASKGAVCLDGTLPGYHLHPGSGSGANRWLIQLEGGGWCNTRRSCIFRKTTRRGSSNHMEKVLAFTGILSNKSNENPDFFNWNRVKLRYCDGASFTGDSQDESSQLYYRGQRIWHSAMEELLSKGMQKAEQALLSGCSAGGLASILHCDQFKELFPGTTTVKCLSDAGMFMDAVDVSGGHSLRKMFQGVVTVQNLQKELSTACTKHLDPTSCFFPQNLVSGIKTPMFLLNAAYDAWQVQESLAPPSVDLSGSWKACKSDHSHCNSSQIQFFQDFRTHMVDAVKSFATSTHNGVFINSCFAHCQSERQDTWYAPDSPTLHGKTVAESVGDWYFDRTTVKAIDCPYPCDKTCHNLIFK</sequence>
<proteinExistence type="evidence at transcript level"/>
<gene>
    <name evidence="6" type="primary">PAE3</name>
    <name evidence="8" type="ordered locus">At2g46930</name>
</gene>
<keyword id="KW-0134">Cell wall</keyword>
<keyword id="KW-0961">Cell wall biogenesis/degradation</keyword>
<keyword id="KW-0325">Glycoprotein</keyword>
<keyword id="KW-0378">Hydrolase</keyword>
<keyword id="KW-1185">Reference proteome</keyword>
<keyword id="KW-0964">Secreted</keyword>
<keyword id="KW-0732">Signal</keyword>